<feature type="chain" id="PRO_0000328328" description="Glyoxylase B2">
    <location>
        <begin position="1"/>
        <end position="292"/>
    </location>
</feature>
<feature type="binding site" evidence="1">
    <location>
        <position position="72"/>
    </location>
    <ligand>
        <name>Zn(2+)</name>
        <dbReference type="ChEBI" id="CHEBI:29105"/>
        <label>1</label>
    </ligand>
</feature>
<feature type="binding site" evidence="1">
    <location>
        <position position="74"/>
    </location>
    <ligand>
        <name>Zn(2+)</name>
        <dbReference type="ChEBI" id="CHEBI:29105"/>
        <label>1</label>
    </ligand>
</feature>
<feature type="binding site" evidence="1">
    <location>
        <position position="76"/>
    </location>
    <ligand>
        <name>Zn(2+)</name>
        <dbReference type="ChEBI" id="CHEBI:29105"/>
        <label>2</label>
    </ligand>
</feature>
<feature type="binding site" evidence="1">
    <location>
        <position position="77"/>
    </location>
    <ligand>
        <name>Zn(2+)</name>
        <dbReference type="ChEBI" id="CHEBI:29105"/>
        <label>2</label>
    </ligand>
</feature>
<feature type="binding site" evidence="1">
    <location>
        <position position="148"/>
    </location>
    <ligand>
        <name>Zn(2+)</name>
        <dbReference type="ChEBI" id="CHEBI:29105"/>
        <label>1</label>
    </ligand>
</feature>
<feature type="binding site" evidence="1">
    <location>
        <position position="166"/>
    </location>
    <ligand>
        <name>Zn(2+)</name>
        <dbReference type="ChEBI" id="CHEBI:29105"/>
        <label>1</label>
    </ligand>
</feature>
<feature type="binding site" evidence="1">
    <location>
        <position position="166"/>
    </location>
    <ligand>
        <name>Zn(2+)</name>
        <dbReference type="ChEBI" id="CHEBI:29105"/>
        <label>2</label>
    </ligand>
</feature>
<feature type="binding site" evidence="1">
    <location>
        <begin position="175"/>
        <end position="181"/>
    </location>
    <ligand>
        <name>substrate</name>
    </ligand>
</feature>
<feature type="binding site" evidence="1">
    <location>
        <begin position="208"/>
        <end position="210"/>
    </location>
    <ligand>
        <name>substrate</name>
    </ligand>
</feature>
<feature type="binding site" evidence="1">
    <location>
        <position position="208"/>
    </location>
    <ligand>
        <name>Zn(2+)</name>
        <dbReference type="ChEBI" id="CHEBI:29105"/>
        <label>2</label>
    </ligand>
</feature>
<feature type="binding site" evidence="1">
    <location>
        <begin position="284"/>
        <end position="287"/>
    </location>
    <ligand>
        <name>substrate</name>
    </ligand>
</feature>
<reference key="1">
    <citation type="journal article" date="2005" name="Nature">
        <title>The genome of the social amoeba Dictyostelium discoideum.</title>
        <authorList>
            <person name="Eichinger L."/>
            <person name="Pachebat J.A."/>
            <person name="Gloeckner G."/>
            <person name="Rajandream M.A."/>
            <person name="Sucgang R."/>
            <person name="Berriman M."/>
            <person name="Song J."/>
            <person name="Olsen R."/>
            <person name="Szafranski K."/>
            <person name="Xu Q."/>
            <person name="Tunggal B."/>
            <person name="Kummerfeld S."/>
            <person name="Madera M."/>
            <person name="Konfortov B.A."/>
            <person name="Rivero F."/>
            <person name="Bankier A.T."/>
            <person name="Lehmann R."/>
            <person name="Hamlin N."/>
            <person name="Davies R."/>
            <person name="Gaudet P."/>
            <person name="Fey P."/>
            <person name="Pilcher K."/>
            <person name="Chen G."/>
            <person name="Saunders D."/>
            <person name="Sodergren E.J."/>
            <person name="Davis P."/>
            <person name="Kerhornou A."/>
            <person name="Nie X."/>
            <person name="Hall N."/>
            <person name="Anjard C."/>
            <person name="Hemphill L."/>
            <person name="Bason N."/>
            <person name="Farbrother P."/>
            <person name="Desany B."/>
            <person name="Just E."/>
            <person name="Morio T."/>
            <person name="Rost R."/>
            <person name="Churcher C.M."/>
            <person name="Cooper J."/>
            <person name="Haydock S."/>
            <person name="van Driessche N."/>
            <person name="Cronin A."/>
            <person name="Goodhead I."/>
            <person name="Muzny D.M."/>
            <person name="Mourier T."/>
            <person name="Pain A."/>
            <person name="Lu M."/>
            <person name="Harper D."/>
            <person name="Lindsay R."/>
            <person name="Hauser H."/>
            <person name="James K.D."/>
            <person name="Quiles M."/>
            <person name="Madan Babu M."/>
            <person name="Saito T."/>
            <person name="Buchrieser C."/>
            <person name="Wardroper A."/>
            <person name="Felder M."/>
            <person name="Thangavelu M."/>
            <person name="Johnson D."/>
            <person name="Knights A."/>
            <person name="Loulseged H."/>
            <person name="Mungall K.L."/>
            <person name="Oliver K."/>
            <person name="Price C."/>
            <person name="Quail M.A."/>
            <person name="Urushihara H."/>
            <person name="Hernandez J."/>
            <person name="Rabbinowitsch E."/>
            <person name="Steffen D."/>
            <person name="Sanders M."/>
            <person name="Ma J."/>
            <person name="Kohara Y."/>
            <person name="Sharp S."/>
            <person name="Simmonds M.N."/>
            <person name="Spiegler S."/>
            <person name="Tivey A."/>
            <person name="Sugano S."/>
            <person name="White B."/>
            <person name="Walker D."/>
            <person name="Woodward J.R."/>
            <person name="Winckler T."/>
            <person name="Tanaka Y."/>
            <person name="Shaulsky G."/>
            <person name="Schleicher M."/>
            <person name="Weinstock G.M."/>
            <person name="Rosenthal A."/>
            <person name="Cox E.C."/>
            <person name="Chisholm R.L."/>
            <person name="Gibbs R.A."/>
            <person name="Loomis W.F."/>
            <person name="Platzer M."/>
            <person name="Kay R.R."/>
            <person name="Williams J.G."/>
            <person name="Dear P.H."/>
            <person name="Noegel A.A."/>
            <person name="Barrell B.G."/>
            <person name="Kuspa A."/>
        </authorList>
    </citation>
    <scope>NUCLEOTIDE SEQUENCE [LARGE SCALE GENOMIC DNA]</scope>
    <source>
        <strain>AX4</strain>
    </source>
</reference>
<name>GLOB2_DICDI</name>
<proteinExistence type="inferred from homology"/>
<keyword id="KW-0378">Hydrolase</keyword>
<keyword id="KW-0479">Metal-binding</keyword>
<keyword id="KW-1185">Reference proteome</keyword>
<keyword id="KW-0862">Zinc</keyword>
<comment type="cofactor">
    <cofactor evidence="1">
        <name>Zn(2+)</name>
        <dbReference type="ChEBI" id="CHEBI:29105"/>
    </cofactor>
    <text evidence="1">Binds 2 Zn(2+) ions per subunit.</text>
</comment>
<comment type="similarity">
    <text evidence="2">Belongs to the metallo-beta-lactamase superfamily. Glyoxalase II family.</text>
</comment>
<evidence type="ECO:0000250" key="1">
    <source>
        <dbReference type="UniProtKB" id="Q16775"/>
    </source>
</evidence>
<evidence type="ECO:0000305" key="2"/>
<accession>Q54EJ5</accession>
<organism>
    <name type="scientific">Dictyostelium discoideum</name>
    <name type="common">Social amoeba</name>
    <dbReference type="NCBI Taxonomy" id="44689"/>
    <lineage>
        <taxon>Eukaryota</taxon>
        <taxon>Amoebozoa</taxon>
        <taxon>Evosea</taxon>
        <taxon>Eumycetozoa</taxon>
        <taxon>Dictyostelia</taxon>
        <taxon>Dictyosteliales</taxon>
        <taxon>Dictyosteliaceae</taxon>
        <taxon>Dictyostelium</taxon>
    </lineage>
</organism>
<sequence>MSNKAKIEVFPELESATGQMIIIDEQTKKCAILDSVLNYTQNNGRTSTKDADKLIAYIKENQLEPEWILETHIHADHLSGAHYLKGIYPNAKTAIGEGAKIVQKTFKTIYNLEHTFPTDGSQFDKLFTDDERFTIGSLQVRVISTPGHTPACVSYYIENDSVFVGDTMFMPDVGTARCDFPNGSAETLWTSMKKILELPETVKVYVCHDYPPQERGITFFTTIAEQRLSNKHIKDSVTKDEFIKMRTERDATLKAPQLLLPSIQVNIRAGELPPKEDNGISYIKIPLNYLKQ</sequence>
<dbReference type="EC" id="3.-.-.-"/>
<dbReference type="EMBL" id="AAFI02000177">
    <property type="protein sequence ID" value="EAL61725.1"/>
    <property type="molecule type" value="Genomic_DNA"/>
</dbReference>
<dbReference type="RefSeq" id="XP_635245.1">
    <property type="nucleotide sequence ID" value="XM_630153.1"/>
</dbReference>
<dbReference type="SMR" id="Q54EJ5"/>
<dbReference type="FunCoup" id="Q54EJ5">
    <property type="interactions" value="173"/>
</dbReference>
<dbReference type="STRING" id="44689.Q54EJ5"/>
<dbReference type="PaxDb" id="44689-DDB0230991"/>
<dbReference type="EnsemblProtists" id="EAL61725">
    <property type="protein sequence ID" value="EAL61725"/>
    <property type="gene ID" value="DDB_G0291482"/>
</dbReference>
<dbReference type="GeneID" id="8628191"/>
<dbReference type="KEGG" id="ddi:DDB_G0291482"/>
<dbReference type="dictyBase" id="DDB_G0291482">
    <property type="gene designation" value="gloB2"/>
</dbReference>
<dbReference type="VEuPathDB" id="AmoebaDB:DDB_G0291482"/>
<dbReference type="eggNOG" id="KOG0814">
    <property type="taxonomic scope" value="Eukaryota"/>
</dbReference>
<dbReference type="HOGENOM" id="CLU_030571_6_1_1"/>
<dbReference type="InParanoid" id="Q54EJ5"/>
<dbReference type="OMA" id="GTWQYLI"/>
<dbReference type="PhylomeDB" id="Q54EJ5"/>
<dbReference type="PRO" id="PR:Q54EJ5"/>
<dbReference type="Proteomes" id="UP000002195">
    <property type="component" value="Chromosome 6"/>
</dbReference>
<dbReference type="GO" id="GO:0005737">
    <property type="term" value="C:cytoplasm"/>
    <property type="evidence" value="ECO:0000250"/>
    <property type="project" value="dictyBase"/>
</dbReference>
<dbReference type="GO" id="GO:0004416">
    <property type="term" value="F:hydroxyacylglutathione hydrolase activity"/>
    <property type="evidence" value="ECO:0000250"/>
    <property type="project" value="dictyBase"/>
</dbReference>
<dbReference type="GO" id="GO:0046872">
    <property type="term" value="F:metal ion binding"/>
    <property type="evidence" value="ECO:0007669"/>
    <property type="project" value="UniProtKB-KW"/>
</dbReference>
<dbReference type="GO" id="GO:0050313">
    <property type="term" value="F:sulfur dioxygenase activity"/>
    <property type="evidence" value="ECO:0000318"/>
    <property type="project" value="GO_Central"/>
</dbReference>
<dbReference type="GO" id="GO:0006749">
    <property type="term" value="P:glutathione metabolic process"/>
    <property type="evidence" value="ECO:0000318"/>
    <property type="project" value="GO_Central"/>
</dbReference>
<dbReference type="GO" id="GO:0070813">
    <property type="term" value="P:hydrogen sulfide metabolic process"/>
    <property type="evidence" value="ECO:0000318"/>
    <property type="project" value="GO_Central"/>
</dbReference>
<dbReference type="GO" id="GO:0019243">
    <property type="term" value="P:methylglyoxal catabolic process to D-lactate via S-lactoyl-glutathione"/>
    <property type="evidence" value="ECO:0000250"/>
    <property type="project" value="dictyBase"/>
</dbReference>
<dbReference type="CDD" id="cd07724">
    <property type="entry name" value="POD-like_MBL-fold"/>
    <property type="match status" value="1"/>
</dbReference>
<dbReference type="FunFam" id="3.60.15.10:FF:000033">
    <property type="entry name" value="MBL fold metallo-hydrolase"/>
    <property type="match status" value="1"/>
</dbReference>
<dbReference type="Gene3D" id="3.60.15.10">
    <property type="entry name" value="Ribonuclease Z/Hydroxyacylglutathione hydrolase-like"/>
    <property type="match status" value="1"/>
</dbReference>
<dbReference type="InterPro" id="IPR001279">
    <property type="entry name" value="Metallo-B-lactamas"/>
</dbReference>
<dbReference type="InterPro" id="IPR051682">
    <property type="entry name" value="Mito_Persulfide_Diox"/>
</dbReference>
<dbReference type="InterPro" id="IPR044528">
    <property type="entry name" value="POD-like_MBL-fold"/>
</dbReference>
<dbReference type="InterPro" id="IPR036866">
    <property type="entry name" value="RibonucZ/Hydroxyglut_hydro"/>
</dbReference>
<dbReference type="PANTHER" id="PTHR43084">
    <property type="entry name" value="PERSULFIDE DIOXYGENASE ETHE1"/>
    <property type="match status" value="1"/>
</dbReference>
<dbReference type="PANTHER" id="PTHR43084:SF1">
    <property type="entry name" value="PERSULFIDE DIOXYGENASE ETHE1, MITOCHONDRIAL"/>
    <property type="match status" value="1"/>
</dbReference>
<dbReference type="Pfam" id="PF00753">
    <property type="entry name" value="Lactamase_B"/>
    <property type="match status" value="1"/>
</dbReference>
<dbReference type="SMART" id="SM00849">
    <property type="entry name" value="Lactamase_B"/>
    <property type="match status" value="1"/>
</dbReference>
<dbReference type="SUPFAM" id="SSF56281">
    <property type="entry name" value="Metallo-hydrolase/oxidoreductase"/>
    <property type="match status" value="1"/>
</dbReference>
<protein>
    <recommendedName>
        <fullName>Glyoxylase B2</fullName>
        <ecNumber>3.-.-.-</ecNumber>
    </recommendedName>
</protein>
<gene>
    <name type="primary">gloB2</name>
    <name type="ORF">DDB_G0291482</name>
</gene>